<keyword id="KW-0025">Alternative splicing</keyword>
<keyword id="KW-0539">Nucleus</keyword>
<keyword id="KW-1185">Reference proteome</keyword>
<name>INKA2_MOUSE</name>
<dbReference type="EMBL" id="AK033558">
    <property type="protein sequence ID" value="BAC28358.1"/>
    <property type="molecule type" value="mRNA"/>
</dbReference>
<dbReference type="EMBL" id="AK078368">
    <property type="protein sequence ID" value="BAC37240.1"/>
    <property type="molecule type" value="mRNA"/>
</dbReference>
<dbReference type="EMBL" id="BC052371">
    <property type="protein sequence ID" value="AAH52371.1"/>
    <property type="molecule type" value="mRNA"/>
</dbReference>
<dbReference type="CCDS" id="CCDS17710.1">
    <molecule id="Q80VY2-1"/>
</dbReference>
<dbReference type="CCDS" id="CCDS51035.1">
    <molecule id="Q80VY2-2"/>
</dbReference>
<dbReference type="RefSeq" id="NP_001156828.1">
    <molecule id="Q80VY2-2"/>
    <property type="nucleotide sequence ID" value="NM_001163356.1"/>
</dbReference>
<dbReference type="RefSeq" id="NP_780607.2">
    <molecule id="Q80VY2-1"/>
    <property type="nucleotide sequence ID" value="NM_175398.4"/>
</dbReference>
<dbReference type="SMR" id="Q80VY2"/>
<dbReference type="BioGRID" id="224536">
    <property type="interactions" value="2"/>
</dbReference>
<dbReference type="FunCoup" id="Q80VY2">
    <property type="interactions" value="1912"/>
</dbReference>
<dbReference type="STRING" id="10090.ENSMUSP00000069212"/>
<dbReference type="PhosphoSitePlus" id="Q80VY2"/>
<dbReference type="PaxDb" id="10090-ENSMUSP00000069212"/>
<dbReference type="PeptideAtlas" id="Q80VY2"/>
<dbReference type="ProteomicsDB" id="267140">
    <molecule id="Q80VY2-1"/>
</dbReference>
<dbReference type="ProteomicsDB" id="267141">
    <molecule id="Q80VY2-2"/>
</dbReference>
<dbReference type="Antibodypedia" id="33813">
    <property type="antibodies" value="109 antibodies from 12 providers"/>
</dbReference>
<dbReference type="Ensembl" id="ENSMUST00000066610.8">
    <molecule id="Q80VY2-1"/>
    <property type="protein sequence ID" value="ENSMUSP00000069212.8"/>
    <property type="gene ID" value="ENSMUSG00000048458.9"/>
</dbReference>
<dbReference type="Ensembl" id="ENSMUST00000098273.3">
    <molecule id="Q80VY2-2"/>
    <property type="protein sequence ID" value="ENSMUSP00000095874.3"/>
    <property type="gene ID" value="ENSMUSG00000048458.9"/>
</dbReference>
<dbReference type="GeneID" id="109050"/>
<dbReference type="KEGG" id="mmu:109050"/>
<dbReference type="UCSC" id="uc008qvc.2">
    <molecule id="Q80VY2-1"/>
    <property type="organism name" value="mouse"/>
</dbReference>
<dbReference type="AGR" id="MGI:1923497"/>
<dbReference type="CTD" id="55924"/>
<dbReference type="MGI" id="MGI:1923497">
    <property type="gene designation" value="Inka2"/>
</dbReference>
<dbReference type="VEuPathDB" id="HostDB:ENSMUSG00000048458"/>
<dbReference type="eggNOG" id="ENOG502RZNT">
    <property type="taxonomic scope" value="Eukaryota"/>
</dbReference>
<dbReference type="GeneTree" id="ENSGT00530000063849"/>
<dbReference type="HOGENOM" id="CLU_082435_0_0_1"/>
<dbReference type="InParanoid" id="Q80VY2"/>
<dbReference type="OMA" id="QPEPPRW"/>
<dbReference type="OrthoDB" id="9931119at2759"/>
<dbReference type="PhylomeDB" id="Q80VY2"/>
<dbReference type="TreeFam" id="TF332839"/>
<dbReference type="BioGRID-ORCS" id="109050">
    <property type="hits" value="1 hit in 76 CRISPR screens"/>
</dbReference>
<dbReference type="ChiTaRS" id="Inka2">
    <property type="organism name" value="mouse"/>
</dbReference>
<dbReference type="PRO" id="PR:Q80VY2"/>
<dbReference type="Proteomes" id="UP000000589">
    <property type="component" value="Chromosome 3"/>
</dbReference>
<dbReference type="RNAct" id="Q80VY2">
    <property type="molecule type" value="protein"/>
</dbReference>
<dbReference type="Bgee" id="ENSMUSG00000048458">
    <property type="expression patterns" value="Expressed in retinal neural layer and 129 other cell types or tissues"/>
</dbReference>
<dbReference type="GO" id="GO:0005730">
    <property type="term" value="C:nucleolus"/>
    <property type="evidence" value="ECO:0007669"/>
    <property type="project" value="Ensembl"/>
</dbReference>
<dbReference type="GO" id="GO:0005654">
    <property type="term" value="C:nucleoplasm"/>
    <property type="evidence" value="ECO:0007669"/>
    <property type="project" value="Ensembl"/>
</dbReference>
<dbReference type="GO" id="GO:0005634">
    <property type="term" value="C:nucleus"/>
    <property type="evidence" value="ECO:0000250"/>
    <property type="project" value="UniProtKB"/>
</dbReference>
<dbReference type="GO" id="GO:0019901">
    <property type="term" value="F:protein kinase binding"/>
    <property type="evidence" value="ECO:0007669"/>
    <property type="project" value="Ensembl"/>
</dbReference>
<dbReference type="GO" id="GO:0030291">
    <property type="term" value="F:protein serine/threonine kinase inhibitor activity"/>
    <property type="evidence" value="ECO:0000250"/>
    <property type="project" value="UniProtKB"/>
</dbReference>
<dbReference type="FunFam" id="3.30.200.20:FF:000319">
    <property type="entry name" value="Inka box actin regulator 2"/>
    <property type="match status" value="1"/>
</dbReference>
<dbReference type="Gene3D" id="3.30.200.20">
    <property type="entry name" value="Phosphorylase Kinase, domain 1"/>
    <property type="match status" value="1"/>
</dbReference>
<dbReference type="InterPro" id="IPR029267">
    <property type="entry name" value="FAM212"/>
</dbReference>
<dbReference type="InterPro" id="IPR039201">
    <property type="entry name" value="Inka"/>
</dbReference>
<dbReference type="PANTHER" id="PTHR28615">
    <property type="entry name" value="PAK4-INHIBITOR INKA1-RELATED"/>
    <property type="match status" value="1"/>
</dbReference>
<dbReference type="PANTHER" id="PTHR28615:SF2">
    <property type="entry name" value="PAK4-INHIBITOR INKA2"/>
    <property type="match status" value="1"/>
</dbReference>
<dbReference type="Pfam" id="PF15342">
    <property type="entry name" value="FAM212"/>
    <property type="match status" value="1"/>
</dbReference>
<gene>
    <name evidence="8" type="primary">Inka2</name>
    <name type="synonym">Fam212b</name>
</gene>
<sequence>MTKESKDMDCYLRRLKQELMSMKEVGDGLQDQMNCMMGALQELKLLQVQTALEQLEISGGTPTFSCPESSQEQPECPRWQGSGGPAGPAAWTSSSQPSFDSSPKLPCRRSVCGKELAVLPKTQLPEEHQSCTQQGTEWVEPDDWTSTLMSRGRNRQPLVLGDNVFADLVGNWLDLPELEKGGEKGETGGSIEPKGEKGQSRELGRKFALTANIFRKFLRSVRPDRDRLLKEKPGWMTPMVSESRAGRSKKVKKRSLSKGSGRFPFSSTGEPRHIETPATSSPKALEPSCRGFDINTAVWV</sequence>
<comment type="function">
    <text evidence="1">Inhibitor of the serine/threonine-protein kinase PAK4. Acts by binding PAK4 in a substrate-like manner, inhibiting the protein kinase activity.</text>
</comment>
<comment type="subunit">
    <text evidence="2">Interacts with PAK4.</text>
</comment>
<comment type="subcellular location">
    <subcellularLocation>
        <location evidence="2">Nucleus</location>
    </subcellularLocation>
</comment>
<comment type="alternative products">
    <event type="alternative splicing"/>
    <isoform>
        <id>Q80VY2-1</id>
        <name>1</name>
        <sequence type="displayed"/>
    </isoform>
    <isoform>
        <id>Q80VY2-2</id>
        <name>2</name>
        <sequence type="described" ref="VSP_028174"/>
    </isoform>
</comment>
<comment type="tissue specificity">
    <text evidence="4">Enriched in the nervous system.</text>
</comment>
<comment type="developmental stage">
    <text evidence="4">During development, expressed in oligodendrocyte progenitor cells and in the proliferative neuronal progenitors in the developing cerebellum. In the embryonic brain, not expressed in immature newborn neurons, except for the cells residing in the marginal zone of the embryonic telencephalon. As brain development proceeds during the postnatal stage, expressed in some populations of immature neurons, including the neocortical pyramidal neurons, hippocampal pyramidal neurons and granule cells migrating in the cerebellar cortex. In the adult brain, expression is confined in terminally differentiated neurons in the restricted forebrain regions.</text>
</comment>
<comment type="domain">
    <text evidence="1">The Inka box (also named iBox or inca box) binds and inhibits PAK4 by binding a substrate-like manner.</text>
</comment>
<comment type="similarity">
    <text evidence="7">Belongs to the INKA family.</text>
</comment>
<accession>Q80VY2</accession>
<accession>Q8C5H0</accession>
<accession>Q8CCA1</accession>
<proteinExistence type="evidence at transcript level"/>
<feature type="chain" id="PRO_0000304995" description="PAK4-inhibitor INKA2">
    <location>
        <begin position="1"/>
        <end position="300"/>
    </location>
</feature>
<feature type="region of interest" description="Disordered" evidence="3">
    <location>
        <begin position="59"/>
        <end position="104"/>
    </location>
</feature>
<feature type="region of interest" description="Inka box" evidence="1">
    <location>
        <begin position="140"/>
        <end position="183"/>
    </location>
</feature>
<feature type="region of interest" description="Disordered" evidence="3">
    <location>
        <begin position="178"/>
        <end position="201"/>
    </location>
</feature>
<feature type="region of interest" description="Disordered" evidence="3">
    <location>
        <begin position="230"/>
        <end position="288"/>
    </location>
</feature>
<feature type="compositionally biased region" description="Polar residues" evidence="3">
    <location>
        <begin position="60"/>
        <end position="73"/>
    </location>
</feature>
<feature type="compositionally biased region" description="Low complexity" evidence="3">
    <location>
        <begin position="93"/>
        <end position="102"/>
    </location>
</feature>
<feature type="compositionally biased region" description="Basic residues" evidence="3">
    <location>
        <begin position="246"/>
        <end position="256"/>
    </location>
</feature>
<feature type="splice variant" id="VSP_028174" description="In isoform 2." evidence="5">
    <location>
        <begin position="1"/>
        <end position="19"/>
    </location>
</feature>
<feature type="sequence conflict" description="In Ref. 1; BAC28358." evidence="7" ref="1">
    <original>G</original>
    <variation>R</variation>
    <location>
        <position position="195"/>
    </location>
</feature>
<reference key="1">
    <citation type="journal article" date="2005" name="Science">
        <title>The transcriptional landscape of the mammalian genome.</title>
        <authorList>
            <person name="Carninci P."/>
            <person name="Kasukawa T."/>
            <person name="Katayama S."/>
            <person name="Gough J."/>
            <person name="Frith M.C."/>
            <person name="Maeda N."/>
            <person name="Oyama R."/>
            <person name="Ravasi T."/>
            <person name="Lenhard B."/>
            <person name="Wells C."/>
            <person name="Kodzius R."/>
            <person name="Shimokawa K."/>
            <person name="Bajic V.B."/>
            <person name="Brenner S.E."/>
            <person name="Batalov S."/>
            <person name="Forrest A.R."/>
            <person name="Zavolan M."/>
            <person name="Davis M.J."/>
            <person name="Wilming L.G."/>
            <person name="Aidinis V."/>
            <person name="Allen J.E."/>
            <person name="Ambesi-Impiombato A."/>
            <person name="Apweiler R."/>
            <person name="Aturaliya R.N."/>
            <person name="Bailey T.L."/>
            <person name="Bansal M."/>
            <person name="Baxter L."/>
            <person name="Beisel K.W."/>
            <person name="Bersano T."/>
            <person name="Bono H."/>
            <person name="Chalk A.M."/>
            <person name="Chiu K.P."/>
            <person name="Choudhary V."/>
            <person name="Christoffels A."/>
            <person name="Clutterbuck D.R."/>
            <person name="Crowe M.L."/>
            <person name="Dalla E."/>
            <person name="Dalrymple B.P."/>
            <person name="de Bono B."/>
            <person name="Della Gatta G."/>
            <person name="di Bernardo D."/>
            <person name="Down T."/>
            <person name="Engstrom P."/>
            <person name="Fagiolini M."/>
            <person name="Faulkner G."/>
            <person name="Fletcher C.F."/>
            <person name="Fukushima T."/>
            <person name="Furuno M."/>
            <person name="Futaki S."/>
            <person name="Gariboldi M."/>
            <person name="Georgii-Hemming P."/>
            <person name="Gingeras T.R."/>
            <person name="Gojobori T."/>
            <person name="Green R.E."/>
            <person name="Gustincich S."/>
            <person name="Harbers M."/>
            <person name="Hayashi Y."/>
            <person name="Hensch T.K."/>
            <person name="Hirokawa N."/>
            <person name="Hill D."/>
            <person name="Huminiecki L."/>
            <person name="Iacono M."/>
            <person name="Ikeo K."/>
            <person name="Iwama A."/>
            <person name="Ishikawa T."/>
            <person name="Jakt M."/>
            <person name="Kanapin A."/>
            <person name="Katoh M."/>
            <person name="Kawasawa Y."/>
            <person name="Kelso J."/>
            <person name="Kitamura H."/>
            <person name="Kitano H."/>
            <person name="Kollias G."/>
            <person name="Krishnan S.P."/>
            <person name="Kruger A."/>
            <person name="Kummerfeld S.K."/>
            <person name="Kurochkin I.V."/>
            <person name="Lareau L.F."/>
            <person name="Lazarevic D."/>
            <person name="Lipovich L."/>
            <person name="Liu J."/>
            <person name="Liuni S."/>
            <person name="McWilliam S."/>
            <person name="Madan Babu M."/>
            <person name="Madera M."/>
            <person name="Marchionni L."/>
            <person name="Matsuda H."/>
            <person name="Matsuzawa S."/>
            <person name="Miki H."/>
            <person name="Mignone F."/>
            <person name="Miyake S."/>
            <person name="Morris K."/>
            <person name="Mottagui-Tabar S."/>
            <person name="Mulder N."/>
            <person name="Nakano N."/>
            <person name="Nakauchi H."/>
            <person name="Ng P."/>
            <person name="Nilsson R."/>
            <person name="Nishiguchi S."/>
            <person name="Nishikawa S."/>
            <person name="Nori F."/>
            <person name="Ohara O."/>
            <person name="Okazaki Y."/>
            <person name="Orlando V."/>
            <person name="Pang K.C."/>
            <person name="Pavan W.J."/>
            <person name="Pavesi G."/>
            <person name="Pesole G."/>
            <person name="Petrovsky N."/>
            <person name="Piazza S."/>
            <person name="Reed J."/>
            <person name="Reid J.F."/>
            <person name="Ring B.Z."/>
            <person name="Ringwald M."/>
            <person name="Rost B."/>
            <person name="Ruan Y."/>
            <person name="Salzberg S.L."/>
            <person name="Sandelin A."/>
            <person name="Schneider C."/>
            <person name="Schoenbach C."/>
            <person name="Sekiguchi K."/>
            <person name="Semple C.A."/>
            <person name="Seno S."/>
            <person name="Sessa L."/>
            <person name="Sheng Y."/>
            <person name="Shibata Y."/>
            <person name="Shimada H."/>
            <person name="Shimada K."/>
            <person name="Silva D."/>
            <person name="Sinclair B."/>
            <person name="Sperling S."/>
            <person name="Stupka E."/>
            <person name="Sugiura K."/>
            <person name="Sultana R."/>
            <person name="Takenaka Y."/>
            <person name="Taki K."/>
            <person name="Tammoja K."/>
            <person name="Tan S.L."/>
            <person name="Tang S."/>
            <person name="Taylor M.S."/>
            <person name="Tegner J."/>
            <person name="Teichmann S.A."/>
            <person name="Ueda H.R."/>
            <person name="van Nimwegen E."/>
            <person name="Verardo R."/>
            <person name="Wei C.L."/>
            <person name="Yagi K."/>
            <person name="Yamanishi H."/>
            <person name="Zabarovsky E."/>
            <person name="Zhu S."/>
            <person name="Zimmer A."/>
            <person name="Hide W."/>
            <person name="Bult C."/>
            <person name="Grimmond S.M."/>
            <person name="Teasdale R.D."/>
            <person name="Liu E.T."/>
            <person name="Brusic V."/>
            <person name="Quackenbush J."/>
            <person name="Wahlestedt C."/>
            <person name="Mattick J.S."/>
            <person name="Hume D.A."/>
            <person name="Kai C."/>
            <person name="Sasaki D."/>
            <person name="Tomaru Y."/>
            <person name="Fukuda S."/>
            <person name="Kanamori-Katayama M."/>
            <person name="Suzuki M."/>
            <person name="Aoki J."/>
            <person name="Arakawa T."/>
            <person name="Iida J."/>
            <person name="Imamura K."/>
            <person name="Itoh M."/>
            <person name="Kato T."/>
            <person name="Kawaji H."/>
            <person name="Kawagashira N."/>
            <person name="Kawashima T."/>
            <person name="Kojima M."/>
            <person name="Kondo S."/>
            <person name="Konno H."/>
            <person name="Nakano K."/>
            <person name="Ninomiya N."/>
            <person name="Nishio T."/>
            <person name="Okada M."/>
            <person name="Plessy C."/>
            <person name="Shibata K."/>
            <person name="Shiraki T."/>
            <person name="Suzuki S."/>
            <person name="Tagami M."/>
            <person name="Waki K."/>
            <person name="Watahiki A."/>
            <person name="Okamura-Oho Y."/>
            <person name="Suzuki H."/>
            <person name="Kawai J."/>
            <person name="Hayashizaki Y."/>
        </authorList>
    </citation>
    <scope>NUCLEOTIDE SEQUENCE [LARGE SCALE MRNA] (ISOFORMS 1 AND 2)</scope>
    <source>
        <strain>C57BL/6J</strain>
        <tissue>Cerebellum</tissue>
        <tissue>Colon</tissue>
    </source>
</reference>
<reference key="2">
    <citation type="journal article" date="2004" name="Genome Res.">
        <title>The status, quality, and expansion of the NIH full-length cDNA project: the Mammalian Gene Collection (MGC).</title>
        <authorList>
            <consortium name="The MGC Project Team"/>
        </authorList>
    </citation>
    <scope>NUCLEOTIDE SEQUENCE [LARGE SCALE MRNA] (ISOFORM 1)</scope>
    <source>
        <tissue>Eye</tissue>
    </source>
</reference>
<reference key="3">
    <citation type="journal article" date="2007" name="Development">
        <title>Inca: a novel p21-activated kinase-associated protein required for cranial neural crest development.</title>
        <authorList>
            <person name="Luo T."/>
            <person name="Xu Y."/>
            <person name="Hoffman T.L."/>
            <person name="Zhang T."/>
            <person name="Schilling T."/>
            <person name="Sargent T.D."/>
        </authorList>
    </citation>
    <scope>IDENTIFICATION</scope>
</reference>
<reference key="4">
    <citation type="journal article" date="2015" name="Gene Expr. Patterns">
        <title>Expression profiles of inka2 in the murine nervous system.</title>
        <authorList>
            <person name="Iwasaki Y."/>
            <person name="Yumoto T."/>
            <person name="Sakakibara S."/>
        </authorList>
    </citation>
    <scope>TISSUE SPECIFICITY</scope>
    <scope>DEVELOPMENTAL STAGE</scope>
</reference>
<evidence type="ECO:0000250" key="1">
    <source>
        <dbReference type="UniProtKB" id="Q96EL1"/>
    </source>
</evidence>
<evidence type="ECO:0000250" key="2">
    <source>
        <dbReference type="UniProtKB" id="Q9NTI7"/>
    </source>
</evidence>
<evidence type="ECO:0000256" key="3">
    <source>
        <dbReference type="SAM" id="MobiDB-lite"/>
    </source>
</evidence>
<evidence type="ECO:0000269" key="4">
    <source>
    </source>
</evidence>
<evidence type="ECO:0000303" key="5">
    <source>
    </source>
</evidence>
<evidence type="ECO:0000303" key="6">
    <source>
    </source>
</evidence>
<evidence type="ECO:0000305" key="7"/>
<evidence type="ECO:0000312" key="8">
    <source>
        <dbReference type="MGI" id="MGI:1923497"/>
    </source>
</evidence>
<protein>
    <recommendedName>
        <fullName evidence="7">PAK4-inhibitor INKA2</fullName>
    </recommendedName>
    <alternativeName>
        <fullName evidence="6">Induced in neural crest by AP2-alpha protein-related homolog</fullName>
        <shortName evidence="6">MInca-r</shortName>
    </alternativeName>
</protein>
<organism>
    <name type="scientific">Mus musculus</name>
    <name type="common">Mouse</name>
    <dbReference type="NCBI Taxonomy" id="10090"/>
    <lineage>
        <taxon>Eukaryota</taxon>
        <taxon>Metazoa</taxon>
        <taxon>Chordata</taxon>
        <taxon>Craniata</taxon>
        <taxon>Vertebrata</taxon>
        <taxon>Euteleostomi</taxon>
        <taxon>Mammalia</taxon>
        <taxon>Eutheria</taxon>
        <taxon>Euarchontoglires</taxon>
        <taxon>Glires</taxon>
        <taxon>Rodentia</taxon>
        <taxon>Myomorpha</taxon>
        <taxon>Muroidea</taxon>
        <taxon>Muridae</taxon>
        <taxon>Murinae</taxon>
        <taxon>Mus</taxon>
        <taxon>Mus</taxon>
    </lineage>
</organism>